<proteinExistence type="evidence at protein level"/>
<evidence type="ECO:0000255" key="1"/>
<evidence type="ECO:0000256" key="2">
    <source>
        <dbReference type="SAM" id="MobiDB-lite"/>
    </source>
</evidence>
<evidence type="ECO:0000269" key="3">
    <source>
    </source>
</evidence>
<evidence type="ECO:0000269" key="4">
    <source>
    </source>
</evidence>
<evidence type="ECO:0000269" key="5">
    <source>
    </source>
</evidence>
<evidence type="ECO:0000269" key="6">
    <source>
    </source>
</evidence>
<protein>
    <recommendedName>
        <fullName>Buccalin</fullName>
    </recommendedName>
    <component>
        <recommendedName>
            <fullName>Buccalin-D</fullName>
        </recommendedName>
    </component>
    <component>
        <recommendedName>
            <fullName>Buccalin-E</fullName>
        </recommendedName>
    </component>
    <component>
        <recommendedName>
            <fullName>Buccalin-F</fullName>
        </recommendedName>
    </component>
    <component>
        <recommendedName>
            <fullName>Buccalin-G</fullName>
        </recommendedName>
    </component>
    <component>
        <recommendedName>
            <fullName>Buccalin-H</fullName>
        </recommendedName>
    </component>
    <component>
        <recommendedName>
            <fullName>Buccalin-A</fullName>
        </recommendedName>
    </component>
    <component>
        <recommendedName>
            <fullName>Buccalin-I</fullName>
        </recommendedName>
    </component>
    <component>
        <recommendedName>
            <fullName>Buccalin-J</fullName>
        </recommendedName>
    </component>
    <component>
        <recommendedName>
            <fullName>Buccalin-K</fullName>
        </recommendedName>
    </component>
    <component>
        <recommendedName>
            <fullName>Buccalin-L</fullName>
        </recommendedName>
    </component>
    <component>
        <recommendedName>
            <fullName>Buccalin-B</fullName>
            <shortName>BUCb</shortName>
        </recommendedName>
    </component>
    <component>
        <recommendedName>
            <fullName>Buccalin-M</fullName>
        </recommendedName>
    </component>
    <component>
        <recommendedName>
            <fullName>Buccalin gene-predicted acidic peptide A</fullName>
            <shortName>BGPAP A</shortName>
        </recommendedName>
    </component>
    <component>
        <recommendedName>
            <fullName>Buccalin-N</fullName>
        </recommendedName>
    </component>
    <component>
        <recommendedName>
            <fullName>Buccalin-O</fullName>
        </recommendedName>
    </component>
    <component>
        <recommendedName>
            <fullName>Buccalin-P</fullName>
        </recommendedName>
    </component>
    <component>
        <recommendedName>
            <fullName>Buccalin-Q</fullName>
        </recommendedName>
    </component>
    <component>
        <recommendedName>
            <fullName>Buccalin-R</fullName>
        </recommendedName>
    </component>
    <component>
        <recommendedName>
            <fullName>Buccalin-C</fullName>
        </recommendedName>
    </component>
    <component>
        <recommendedName>
            <fullName>Buccalin-S</fullName>
        </recommendedName>
    </component>
    <component>
        <recommendedName>
            <fullName>Buccalin gene-predicted acidic peptide B</fullName>
            <shortName>BGPAP B</shortName>
        </recommendedName>
    </component>
</protein>
<comment type="function">
    <text evidence="4">Modulatory neuropeptide, acting presynaptically on nerve terminals to inhibit acetylcholine release.</text>
</comment>
<comment type="subcellular location">
    <subcellularLocation>
        <location>Secreted</location>
    </subcellularLocation>
</comment>
<comment type="tissue specificity">
    <text>Cholinergic motor neuron B15 innervating buccal muscles in Aplysia.</text>
</comment>
<comment type="mass spectrometry">
    <molecule>Buccalin-F</molecule>
</comment>
<comment type="mass spectrometry">
    <molecule>Buccalin-G</molecule>
</comment>
<comment type="mass spectrometry">
    <molecule>Buccalin-A</molecule>
    <text>Buccalin-A.</text>
</comment>
<comment type="mass spectrometry">
    <molecule>Buccalin-L</molecule>
</comment>
<comment type="mass spectrometry">
    <molecule>Buccalin-B</molecule>
    <text>Buccalin-B.</text>
</comment>
<comment type="mass spectrometry">
    <molecule>Buccalin-M</molecule>
</comment>
<comment type="mass spectrometry">
    <molecule>Buccalin-N</molecule>
</comment>
<comment type="mass spectrometry">
    <molecule>Buccalin-Q</molecule>
</comment>
<comment type="mass spectrometry">
    <molecule>Buccalin-R</molecule>
</comment>
<comment type="mass spectrometry">
    <molecule>Buccalin-C</molecule>
    <text>Buccalin-C.</text>
</comment>
<comment type="mass spectrometry">
    <molecule>Buccalin-S</molecule>
</comment>
<sequence>MAHHRGHRHILLYVSLALSLGLALAEDATDPSDDTGSFDDVEAVSEEADLDPYSMSQELNKRPNVDPYSYLPSVGKRAFDHYGFTGGLGKRKIDHFGFVGGLGKRQIDPLGFSGGIGKRYDSFAYSAGLGKRGMDSLAFSGGLGKRGMDSLAFSGGLGKRGMDSLAFSGGLGKRGMDSLAFSGGLGKRGMDSLAFSGGLGKRGMDSLAFSGGLGKRGMDSFTFAPGLGKRGMDSLAFAGGLGKRMDGFAFAPGLGKRMDSFAFAPGLGKRGMDSLAFAGGLGKRMDSFAFAPGLGKRMDSFAFAPGLGKRGLDRYGFVGGLGKRGMDHFAFTGGLGKRDSGEASGDLEEGKRGLDAYSFTGALGKRGLDRYGFVGGLGKRGMDDFAFSPGLGKKRMDSFMFGSRLGKRGMDRFSFSGHLGKRKMDQFSFGPGLGKRGFDHYGFTGGIGKRGFDHYGFTGGIGKRQLDPMLFSGRLGKRSSSEQEEEDVRQVEKRSTTEEQSSKSL</sequence>
<name>BUCC_APLCA</name>
<accession>P20481</accession>
<accession>Q9TWM2</accession>
<keyword id="KW-0027">Amidation</keyword>
<keyword id="KW-0165">Cleavage on pair of basic residues</keyword>
<keyword id="KW-0903">Direct protein sequencing</keyword>
<keyword id="KW-0527">Neuropeptide</keyword>
<keyword id="KW-0873">Pyrrolidone carboxylic acid</keyword>
<keyword id="KW-0964">Secreted</keyword>
<keyword id="KW-0732">Signal</keyword>
<reference key="1">
    <citation type="journal article" date="1993" name="J. Neurosci.">
        <title>The buccalin-related neuropeptides: isolation and characterization of an Aplysia cDNA clone encoding a family of peptide cotransmitters.</title>
        <authorList>
            <person name="Miller M.W."/>
            <person name="Beushausen S."/>
            <person name="Cropper E.C."/>
            <person name="Eisinger K."/>
            <person name="Stamm S."/>
            <person name="Vilim F.S."/>
            <person name="Vitek A."/>
            <person name="Zajc A."/>
            <person name="Kupfermann I."/>
            <person name="Brosius J."/>
            <person name="Weiss K.R."/>
        </authorList>
    </citation>
    <scope>NUCLEOTIDE SEQUENCE [MRNA]</scope>
    <scope>PROTEIN SEQUENCE OF 437-447 AND 451-461</scope>
    <scope>AMIDATION AT VAL-74; LEU-88; LEU-102; ILE-116; LEU-129; LEU-143; LEU-157; LEU-171; LEU-185; LEU-199; LEU-213; LEU-227; LEU-241; LEU-254; LEU-267; LEU-281; LEU-294; LEU-307; LEU-321; LEU-335; GLU-349; LEU-363; LEU-377; LEU-391; LEU-405; LEU-419; LEU-433; ILE-447; ILE-461 AND LEU-475</scope>
</reference>
<reference key="2">
    <citation type="journal article" date="1988" name="Proc. Natl. Acad. Sci. U.S.A.">
        <title>Structure and action of buccalin: a modulatory neuropeptide localized to an identified small cardioactive peptide-containing cholinergic motor neuron of Aplysia californica.</title>
        <authorList>
            <person name="Cropper E.C."/>
            <person name="Miller M.W."/>
            <person name="Tenenbaum R."/>
            <person name="Kolks M.A.G."/>
            <person name="Kupfermann I."/>
            <person name="Weiss K.R."/>
        </authorList>
    </citation>
    <scope>PROTEIN SEQUENCE OF 133-143; 147-157; 161-171; 175-185; 189-199 AND 203-213</scope>
    <scope>AMIDATION AT LEU-143; LEU-157; LEU-171; LEU-185; LEU-199 AND LEU-213</scope>
</reference>
<reference key="3">
    <citation type="journal article" date="1994" name="Peptides">
        <title>Structure, localization, and action of buccalin B: a bioactive peptide from Aplysia.</title>
        <authorList>
            <person name="Vilim F.S."/>
            <person name="Cropper E.C."/>
            <person name="Rosen S.C."/>
            <person name="Tenenbaum R."/>
            <person name="Kupfermann I."/>
            <person name="Weiss K.R."/>
        </authorList>
    </citation>
    <scope>PROTEIN SEQUENCE OF 367-377</scope>
    <scope>FUNCTION</scope>
</reference>
<reference key="4">
    <citation type="journal article" date="1998" name="Peptides">
        <title>Mass spectrometric survey of interganglionically transported peptides in Aplysia.</title>
        <authorList>
            <person name="Li L."/>
            <person name="Moroz T.P."/>
            <person name="Garden R.W."/>
            <person name="Floyd P.D."/>
            <person name="Weiss K.R."/>
            <person name="Sweedler J.V."/>
        </authorList>
    </citation>
    <scope>MASS SPECTROMETRY</scope>
</reference>
<organism>
    <name type="scientific">Aplysia californica</name>
    <name type="common">California sea hare</name>
    <dbReference type="NCBI Taxonomy" id="6500"/>
    <lineage>
        <taxon>Eukaryota</taxon>
        <taxon>Metazoa</taxon>
        <taxon>Spiralia</taxon>
        <taxon>Lophotrochozoa</taxon>
        <taxon>Mollusca</taxon>
        <taxon>Gastropoda</taxon>
        <taxon>Heterobranchia</taxon>
        <taxon>Euthyneura</taxon>
        <taxon>Tectipleura</taxon>
        <taxon>Aplysiida</taxon>
        <taxon>Aplysioidea</taxon>
        <taxon>Aplysiidae</taxon>
        <taxon>Aplysia</taxon>
    </lineage>
</organism>
<feature type="signal peptide" evidence="1">
    <location>
        <begin position="1"/>
        <end position="25"/>
    </location>
</feature>
<feature type="propeptide" id="PRO_0000001881" evidence="1">
    <location>
        <begin position="26"/>
        <end position="62"/>
    </location>
</feature>
<feature type="peptide" id="PRO_0000001882" description="Buccalin-D">
    <location>
        <begin position="63"/>
        <end position="74"/>
    </location>
</feature>
<feature type="peptide" id="PRO_0000001883" description="Buccalin-E">
    <location>
        <begin position="78"/>
        <end position="88"/>
    </location>
</feature>
<feature type="peptide" id="PRO_0000001884" description="Buccalin-F">
    <location>
        <begin position="93"/>
        <end position="102"/>
    </location>
</feature>
<feature type="peptide" id="PRO_0000001885" description="Buccalin-G">
    <location>
        <begin position="106"/>
        <end position="116"/>
    </location>
</feature>
<feature type="peptide" id="PRO_0000001886" description="Buccalin-H" evidence="1">
    <location>
        <begin position="120"/>
        <end position="129"/>
    </location>
</feature>
<feature type="peptide" id="PRO_0000001887" description="Buccalin-A">
    <location>
        <begin position="133"/>
        <end position="143"/>
    </location>
</feature>
<feature type="peptide" id="PRO_0000001888" description="Buccalin-A">
    <location>
        <begin position="147"/>
        <end position="157"/>
    </location>
</feature>
<feature type="peptide" id="PRO_0000001889" description="Buccalin-A">
    <location>
        <begin position="161"/>
        <end position="171"/>
    </location>
</feature>
<feature type="peptide" id="PRO_0000001890" description="Buccalin-A">
    <location>
        <begin position="175"/>
        <end position="185"/>
    </location>
</feature>
<feature type="peptide" id="PRO_0000001891" description="Buccalin-A">
    <location>
        <begin position="189"/>
        <end position="199"/>
    </location>
</feature>
<feature type="peptide" id="PRO_0000001892" description="Buccalin-A">
    <location>
        <begin position="203"/>
        <end position="213"/>
    </location>
</feature>
<feature type="peptide" id="PRO_0000001893" description="Buccalin-I" evidence="1">
    <location>
        <begin position="217"/>
        <end position="227"/>
    </location>
</feature>
<feature type="peptide" id="PRO_0000001894" description="Buccalin-J" evidence="1">
    <location>
        <begin position="231"/>
        <end position="241"/>
    </location>
</feature>
<feature type="peptide" id="PRO_0000001895" description="Buccalin-K" evidence="1">
    <location>
        <begin position="245"/>
        <end position="254"/>
    </location>
</feature>
<feature type="peptide" id="PRO_0000001896" description="Buccalin-L" evidence="1">
    <location>
        <begin position="258"/>
        <end position="267"/>
    </location>
</feature>
<feature type="peptide" id="PRO_0000001897" description="Buccalin-J" evidence="1">
    <location>
        <begin position="271"/>
        <end position="281"/>
    </location>
</feature>
<feature type="peptide" id="PRO_0000001898" description="Buccalin-L" evidence="1">
    <location>
        <begin position="285"/>
        <end position="294"/>
    </location>
</feature>
<feature type="peptide" id="PRO_0000001899" description="Buccalin-L" evidence="1">
    <location>
        <begin position="298"/>
        <end position="307"/>
    </location>
</feature>
<feature type="peptide" id="PRO_0000001900" description="Buccalin-B">
    <location>
        <begin position="311"/>
        <end position="321"/>
    </location>
</feature>
<feature type="peptide" id="PRO_0000001901" description="Buccalin-M">
    <location>
        <begin position="325"/>
        <end position="335"/>
    </location>
</feature>
<feature type="peptide" id="PRO_0000001902" description="Buccalin gene-predicted acidic peptide A" evidence="1">
    <location>
        <begin position="339"/>
        <end position="349"/>
    </location>
</feature>
<feature type="peptide" id="PRO_0000001903" description="Buccalin-N">
    <location>
        <begin position="353"/>
        <end position="363"/>
    </location>
</feature>
<feature type="peptide" id="PRO_0000001904" description="Buccalin-B">
    <location>
        <begin position="367"/>
        <end position="377"/>
    </location>
</feature>
<feature type="peptide" id="PRO_0000001905" description="Buccalin-O" evidence="1">
    <location>
        <begin position="381"/>
        <end position="391"/>
    </location>
</feature>
<feature type="peptide" id="PRO_0000001906" description="Buccalin-P" evidence="1">
    <location>
        <begin position="396"/>
        <end position="405"/>
    </location>
</feature>
<feature type="peptide" id="PRO_0000001907" description="Buccalin-Q">
    <location>
        <begin position="409"/>
        <end position="419"/>
    </location>
</feature>
<feature type="peptide" id="PRO_0000001908" description="Buccalin-R">
    <location>
        <begin position="424"/>
        <end position="433"/>
    </location>
</feature>
<feature type="peptide" id="PRO_0000001909" description="Buccalin-C">
    <location>
        <begin position="437"/>
        <end position="447"/>
    </location>
</feature>
<feature type="peptide" id="PRO_0000001910" description="Buccalin-C">
    <location>
        <begin position="451"/>
        <end position="461"/>
    </location>
</feature>
<feature type="peptide" id="PRO_0000001911" description="Buccalin-S">
    <location>
        <begin position="465"/>
        <end position="475"/>
    </location>
</feature>
<feature type="peptide" id="PRO_0000001912" description="Buccalin gene-predicted acidic peptide B" evidence="1">
    <location>
        <begin position="479"/>
        <end position="492"/>
    </location>
</feature>
<feature type="propeptide" id="PRO_0000001913" evidence="1">
    <location>
        <begin position="495"/>
        <end position="505"/>
    </location>
</feature>
<feature type="region of interest" description="Disordered" evidence="2">
    <location>
        <begin position="472"/>
        <end position="505"/>
    </location>
</feature>
<feature type="compositionally biased region" description="Basic and acidic residues" evidence="2">
    <location>
        <begin position="488"/>
        <end position="505"/>
    </location>
</feature>
<feature type="modified residue" description="Valine amide" evidence="5">
    <location>
        <position position="74"/>
    </location>
</feature>
<feature type="modified residue" description="Leucine amide" evidence="5">
    <location>
        <position position="88"/>
    </location>
</feature>
<feature type="modified residue" description="Leucine amide" evidence="5">
    <location>
        <position position="102"/>
    </location>
</feature>
<feature type="modified residue" description="Pyrrolidone carboxylic acid" evidence="1">
    <location>
        <position position="106"/>
    </location>
</feature>
<feature type="modified residue" description="Isoleucine amide" evidence="5">
    <location>
        <position position="116"/>
    </location>
</feature>
<feature type="modified residue" description="Leucine amide" evidence="5">
    <location>
        <position position="129"/>
    </location>
</feature>
<feature type="modified residue" description="Leucine amide" evidence="3 5">
    <location>
        <position position="143"/>
    </location>
</feature>
<feature type="modified residue" description="Leucine amide" evidence="3 5">
    <location>
        <position position="157"/>
    </location>
</feature>
<feature type="modified residue" description="Leucine amide" evidence="3 5">
    <location>
        <position position="171"/>
    </location>
</feature>
<feature type="modified residue" description="Leucine amide" evidence="3 5">
    <location>
        <position position="185"/>
    </location>
</feature>
<feature type="modified residue" description="Leucine amide" evidence="3 5">
    <location>
        <position position="199"/>
    </location>
</feature>
<feature type="modified residue" description="Leucine amide" evidence="3 5">
    <location>
        <position position="213"/>
    </location>
</feature>
<feature type="modified residue" description="Leucine amide" evidence="5">
    <location>
        <position position="227"/>
    </location>
</feature>
<feature type="modified residue" description="Leucine amide" evidence="5">
    <location>
        <position position="241"/>
    </location>
</feature>
<feature type="modified residue" description="Leucine amide" evidence="5">
    <location>
        <position position="254"/>
    </location>
</feature>
<feature type="modified residue" description="Leucine amide" evidence="5">
    <location>
        <position position="267"/>
    </location>
</feature>
<feature type="modified residue" description="Leucine amide" evidence="5">
    <location>
        <position position="281"/>
    </location>
</feature>
<feature type="modified residue" description="Leucine amide" evidence="5">
    <location>
        <position position="294"/>
    </location>
</feature>
<feature type="modified residue" description="Leucine amide" evidence="5">
    <location>
        <position position="307"/>
    </location>
</feature>
<feature type="modified residue" description="Leucine amide" evidence="5">
    <location>
        <position position="321"/>
    </location>
</feature>
<feature type="modified residue" description="Leucine amide" evidence="5">
    <location>
        <position position="335"/>
    </location>
</feature>
<feature type="modified residue" description="Glutamic acid 1-amide" evidence="5">
    <location>
        <position position="349"/>
    </location>
</feature>
<feature type="modified residue" description="Leucine amide" evidence="5">
    <location>
        <position position="363"/>
    </location>
</feature>
<feature type="modified residue" description="Leucine amide" evidence="5">
    <location>
        <position position="377"/>
    </location>
</feature>
<feature type="modified residue" description="Leucine amide" evidence="5">
    <location>
        <position position="391"/>
    </location>
</feature>
<feature type="modified residue" description="Leucine amide" evidence="5">
    <location>
        <position position="405"/>
    </location>
</feature>
<feature type="modified residue" description="Leucine amide" evidence="5">
    <location>
        <position position="419"/>
    </location>
</feature>
<feature type="modified residue" description="Leucine amide" evidence="5">
    <location>
        <position position="433"/>
    </location>
</feature>
<feature type="modified residue" description="Isoleucine amide" evidence="5">
    <location>
        <position position="447"/>
    </location>
</feature>
<feature type="modified residue" description="Isoleucine amide" evidence="5">
    <location>
        <position position="461"/>
    </location>
</feature>
<feature type="modified residue" description="Pyrrolidone carboxylic acid" evidence="1">
    <location>
        <position position="465"/>
    </location>
</feature>
<feature type="modified residue" description="Leucine amide" evidence="5">
    <location>
        <position position="475"/>
    </location>
</feature>
<dbReference type="EMBL" id="S64298">
    <property type="protein sequence ID" value="AAB27696.2"/>
    <property type="molecule type" value="mRNA"/>
</dbReference>
<dbReference type="PIR" id="A35594">
    <property type="entry name" value="A35594"/>
</dbReference>
<dbReference type="RefSeq" id="NP_001191649.1">
    <property type="nucleotide sequence ID" value="NM_001204720.1"/>
</dbReference>
<dbReference type="EnsemblMetazoa" id="NM_001204720.1">
    <property type="protein sequence ID" value="NP_001191649.1"/>
    <property type="gene ID" value="LOC100533443"/>
</dbReference>
<dbReference type="GeneID" id="100533443"/>
<dbReference type="OrthoDB" id="5919137at2759"/>
<dbReference type="Proteomes" id="UP000694888">
    <property type="component" value="Unplaced"/>
</dbReference>
<dbReference type="GO" id="GO:0005576">
    <property type="term" value="C:extracellular region"/>
    <property type="evidence" value="ECO:0007669"/>
    <property type="project" value="UniProtKB-SubCell"/>
</dbReference>
<dbReference type="GO" id="GO:0007218">
    <property type="term" value="P:neuropeptide signaling pathway"/>
    <property type="evidence" value="ECO:0007669"/>
    <property type="project" value="UniProtKB-KW"/>
</dbReference>